<sequence>MLKYFGTDGVRGEANKVLTPEMAFKLGRMGGYVLTKEKEDGGQARVLVSRDTRISGEMLEHALISGLLSVGIEVLECGVMTTPGLSYLVQAQGADAGVQISASHNPVEDNGIKFFGSNGLKLSDAKEEEIEELIDTKQDMLPRPSAEGLGTVTDFRDGSNKYIQFLENTIPEDLSGIKVVIDGANGAASAFISRLFADLDVDFTTISTHPNGLNINDHCGATHTARLQEEVVKQGAQLGLAFDGDADRCIAVDENGNEVDGDHIMYVIGSYLADHGRLKKDTIVTTVMSNLGFTKALERRGIKNVRTQVGDRYVSEEMRANGYSLGGEQSGHVIISDYHNTGDGMLTGLHLMLVMKKTGKSLTELLADFKEYPQVLVNVPVKDKNSWKNHQAVVDAIDSVEKDMAGNGRVLVRPSGTQELLRVMAEGPTQEITQEYVDRIVKVVTTEMGE</sequence>
<organism>
    <name type="scientific">Lactobacillus delbrueckii subsp. bulgaricus (strain ATCC BAA-365 / Lb-18)</name>
    <dbReference type="NCBI Taxonomy" id="321956"/>
    <lineage>
        <taxon>Bacteria</taxon>
        <taxon>Bacillati</taxon>
        <taxon>Bacillota</taxon>
        <taxon>Bacilli</taxon>
        <taxon>Lactobacillales</taxon>
        <taxon>Lactobacillaceae</taxon>
        <taxon>Lactobacillus</taxon>
    </lineage>
</organism>
<feature type="chain" id="PRO_0000301329" description="Phosphoglucosamine mutase">
    <location>
        <begin position="1"/>
        <end position="450"/>
    </location>
</feature>
<feature type="active site" description="Phosphoserine intermediate" evidence="1">
    <location>
        <position position="103"/>
    </location>
</feature>
<feature type="binding site" description="via phosphate group" evidence="1">
    <location>
        <position position="103"/>
    </location>
    <ligand>
        <name>Mg(2+)</name>
        <dbReference type="ChEBI" id="CHEBI:18420"/>
    </ligand>
</feature>
<feature type="binding site" evidence="1">
    <location>
        <position position="243"/>
    </location>
    <ligand>
        <name>Mg(2+)</name>
        <dbReference type="ChEBI" id="CHEBI:18420"/>
    </ligand>
</feature>
<feature type="binding site" evidence="1">
    <location>
        <position position="245"/>
    </location>
    <ligand>
        <name>Mg(2+)</name>
        <dbReference type="ChEBI" id="CHEBI:18420"/>
    </ligand>
</feature>
<feature type="binding site" evidence="1">
    <location>
        <position position="247"/>
    </location>
    <ligand>
        <name>Mg(2+)</name>
        <dbReference type="ChEBI" id="CHEBI:18420"/>
    </ligand>
</feature>
<feature type="modified residue" description="Phosphoserine" evidence="1">
    <location>
        <position position="103"/>
    </location>
</feature>
<protein>
    <recommendedName>
        <fullName evidence="1">Phosphoglucosamine mutase</fullName>
        <ecNumber evidence="1">5.4.2.10</ecNumber>
    </recommendedName>
</protein>
<keyword id="KW-0413">Isomerase</keyword>
<keyword id="KW-0460">Magnesium</keyword>
<keyword id="KW-0479">Metal-binding</keyword>
<keyword id="KW-0597">Phosphoprotein</keyword>
<dbReference type="EC" id="5.4.2.10" evidence="1"/>
<dbReference type="EMBL" id="CP000412">
    <property type="protein sequence ID" value="ABJ58216.1"/>
    <property type="molecule type" value="Genomic_DNA"/>
</dbReference>
<dbReference type="RefSeq" id="WP_003622739.1">
    <property type="nucleotide sequence ID" value="NC_008529.1"/>
</dbReference>
<dbReference type="SMR" id="Q04BF6"/>
<dbReference type="KEGG" id="lbu:LBUL_0584"/>
<dbReference type="HOGENOM" id="CLU_016950_7_0_9"/>
<dbReference type="BioCyc" id="LDEL321956:LBUL_RS02780-MONOMER"/>
<dbReference type="GO" id="GO:0005829">
    <property type="term" value="C:cytosol"/>
    <property type="evidence" value="ECO:0007669"/>
    <property type="project" value="TreeGrafter"/>
</dbReference>
<dbReference type="GO" id="GO:0000287">
    <property type="term" value="F:magnesium ion binding"/>
    <property type="evidence" value="ECO:0007669"/>
    <property type="project" value="UniProtKB-UniRule"/>
</dbReference>
<dbReference type="GO" id="GO:0008966">
    <property type="term" value="F:phosphoglucosamine mutase activity"/>
    <property type="evidence" value="ECO:0007669"/>
    <property type="project" value="UniProtKB-UniRule"/>
</dbReference>
<dbReference type="GO" id="GO:0004615">
    <property type="term" value="F:phosphomannomutase activity"/>
    <property type="evidence" value="ECO:0007669"/>
    <property type="project" value="TreeGrafter"/>
</dbReference>
<dbReference type="GO" id="GO:0005975">
    <property type="term" value="P:carbohydrate metabolic process"/>
    <property type="evidence" value="ECO:0007669"/>
    <property type="project" value="InterPro"/>
</dbReference>
<dbReference type="GO" id="GO:0009252">
    <property type="term" value="P:peptidoglycan biosynthetic process"/>
    <property type="evidence" value="ECO:0007669"/>
    <property type="project" value="TreeGrafter"/>
</dbReference>
<dbReference type="GO" id="GO:0006048">
    <property type="term" value="P:UDP-N-acetylglucosamine biosynthetic process"/>
    <property type="evidence" value="ECO:0007669"/>
    <property type="project" value="TreeGrafter"/>
</dbReference>
<dbReference type="CDD" id="cd05802">
    <property type="entry name" value="GlmM"/>
    <property type="match status" value="1"/>
</dbReference>
<dbReference type="FunFam" id="3.30.310.50:FF:000001">
    <property type="entry name" value="Phosphoglucosamine mutase"/>
    <property type="match status" value="1"/>
</dbReference>
<dbReference type="FunFam" id="3.40.120.10:FF:000001">
    <property type="entry name" value="Phosphoglucosamine mutase"/>
    <property type="match status" value="1"/>
</dbReference>
<dbReference type="FunFam" id="3.40.120.10:FF:000002">
    <property type="entry name" value="Phosphoglucosamine mutase"/>
    <property type="match status" value="1"/>
</dbReference>
<dbReference type="Gene3D" id="3.40.120.10">
    <property type="entry name" value="Alpha-D-Glucose-1,6-Bisphosphate, subunit A, domain 3"/>
    <property type="match status" value="3"/>
</dbReference>
<dbReference type="Gene3D" id="3.30.310.50">
    <property type="entry name" value="Alpha-D-phosphohexomutase, C-terminal domain"/>
    <property type="match status" value="1"/>
</dbReference>
<dbReference type="HAMAP" id="MF_01554_B">
    <property type="entry name" value="GlmM_B"/>
    <property type="match status" value="1"/>
</dbReference>
<dbReference type="InterPro" id="IPR005844">
    <property type="entry name" value="A-D-PHexomutase_a/b/a-I"/>
</dbReference>
<dbReference type="InterPro" id="IPR016055">
    <property type="entry name" value="A-D-PHexomutase_a/b/a-I/II/III"/>
</dbReference>
<dbReference type="InterPro" id="IPR005845">
    <property type="entry name" value="A-D-PHexomutase_a/b/a-II"/>
</dbReference>
<dbReference type="InterPro" id="IPR005846">
    <property type="entry name" value="A-D-PHexomutase_a/b/a-III"/>
</dbReference>
<dbReference type="InterPro" id="IPR005843">
    <property type="entry name" value="A-D-PHexomutase_C"/>
</dbReference>
<dbReference type="InterPro" id="IPR036900">
    <property type="entry name" value="A-D-PHexomutase_C_sf"/>
</dbReference>
<dbReference type="InterPro" id="IPR016066">
    <property type="entry name" value="A-D-PHexomutase_CS"/>
</dbReference>
<dbReference type="InterPro" id="IPR005841">
    <property type="entry name" value="Alpha-D-phosphohexomutase_SF"/>
</dbReference>
<dbReference type="InterPro" id="IPR006352">
    <property type="entry name" value="GlmM_bact"/>
</dbReference>
<dbReference type="InterPro" id="IPR050060">
    <property type="entry name" value="Phosphoglucosamine_mutase"/>
</dbReference>
<dbReference type="NCBIfam" id="TIGR01455">
    <property type="entry name" value="glmM"/>
    <property type="match status" value="1"/>
</dbReference>
<dbReference type="NCBIfam" id="NF008139">
    <property type="entry name" value="PRK10887.1"/>
    <property type="match status" value="1"/>
</dbReference>
<dbReference type="PANTHER" id="PTHR42946:SF1">
    <property type="entry name" value="PHOSPHOGLUCOMUTASE (ALPHA-D-GLUCOSE-1,6-BISPHOSPHATE-DEPENDENT)"/>
    <property type="match status" value="1"/>
</dbReference>
<dbReference type="PANTHER" id="PTHR42946">
    <property type="entry name" value="PHOSPHOHEXOSE MUTASE"/>
    <property type="match status" value="1"/>
</dbReference>
<dbReference type="Pfam" id="PF02878">
    <property type="entry name" value="PGM_PMM_I"/>
    <property type="match status" value="1"/>
</dbReference>
<dbReference type="Pfam" id="PF02879">
    <property type="entry name" value="PGM_PMM_II"/>
    <property type="match status" value="1"/>
</dbReference>
<dbReference type="Pfam" id="PF02880">
    <property type="entry name" value="PGM_PMM_III"/>
    <property type="match status" value="1"/>
</dbReference>
<dbReference type="Pfam" id="PF00408">
    <property type="entry name" value="PGM_PMM_IV"/>
    <property type="match status" value="1"/>
</dbReference>
<dbReference type="PRINTS" id="PR00509">
    <property type="entry name" value="PGMPMM"/>
</dbReference>
<dbReference type="SUPFAM" id="SSF55957">
    <property type="entry name" value="Phosphoglucomutase, C-terminal domain"/>
    <property type="match status" value="1"/>
</dbReference>
<dbReference type="SUPFAM" id="SSF53738">
    <property type="entry name" value="Phosphoglucomutase, first 3 domains"/>
    <property type="match status" value="3"/>
</dbReference>
<dbReference type="PROSITE" id="PS00710">
    <property type="entry name" value="PGM_PMM"/>
    <property type="match status" value="1"/>
</dbReference>
<evidence type="ECO:0000255" key="1">
    <source>
        <dbReference type="HAMAP-Rule" id="MF_01554"/>
    </source>
</evidence>
<accession>Q04BF6</accession>
<reference key="1">
    <citation type="journal article" date="2006" name="Proc. Natl. Acad. Sci. U.S.A.">
        <title>Comparative genomics of the lactic acid bacteria.</title>
        <authorList>
            <person name="Makarova K.S."/>
            <person name="Slesarev A."/>
            <person name="Wolf Y.I."/>
            <person name="Sorokin A."/>
            <person name="Mirkin B."/>
            <person name="Koonin E.V."/>
            <person name="Pavlov A."/>
            <person name="Pavlova N."/>
            <person name="Karamychev V."/>
            <person name="Polouchine N."/>
            <person name="Shakhova V."/>
            <person name="Grigoriev I."/>
            <person name="Lou Y."/>
            <person name="Rohksar D."/>
            <person name="Lucas S."/>
            <person name="Huang K."/>
            <person name="Goodstein D.M."/>
            <person name="Hawkins T."/>
            <person name="Plengvidhya V."/>
            <person name="Welker D."/>
            <person name="Hughes J."/>
            <person name="Goh Y."/>
            <person name="Benson A."/>
            <person name="Baldwin K."/>
            <person name="Lee J.-H."/>
            <person name="Diaz-Muniz I."/>
            <person name="Dosti B."/>
            <person name="Smeianov V."/>
            <person name="Wechter W."/>
            <person name="Barabote R."/>
            <person name="Lorca G."/>
            <person name="Altermann E."/>
            <person name="Barrangou R."/>
            <person name="Ganesan B."/>
            <person name="Xie Y."/>
            <person name="Rawsthorne H."/>
            <person name="Tamir D."/>
            <person name="Parker C."/>
            <person name="Breidt F."/>
            <person name="Broadbent J.R."/>
            <person name="Hutkins R."/>
            <person name="O'Sullivan D."/>
            <person name="Steele J."/>
            <person name="Unlu G."/>
            <person name="Saier M.H. Jr."/>
            <person name="Klaenhammer T."/>
            <person name="Richardson P."/>
            <person name="Kozyavkin S."/>
            <person name="Weimer B.C."/>
            <person name="Mills D.A."/>
        </authorList>
    </citation>
    <scope>NUCLEOTIDE SEQUENCE [LARGE SCALE GENOMIC DNA]</scope>
    <source>
        <strain>ATCC BAA-365 / Lb-18</strain>
    </source>
</reference>
<comment type="function">
    <text evidence="1">Catalyzes the conversion of glucosamine-6-phosphate to glucosamine-1-phosphate.</text>
</comment>
<comment type="catalytic activity">
    <reaction evidence="1">
        <text>alpha-D-glucosamine 1-phosphate = D-glucosamine 6-phosphate</text>
        <dbReference type="Rhea" id="RHEA:23424"/>
        <dbReference type="ChEBI" id="CHEBI:58516"/>
        <dbReference type="ChEBI" id="CHEBI:58725"/>
        <dbReference type="EC" id="5.4.2.10"/>
    </reaction>
</comment>
<comment type="cofactor">
    <cofactor evidence="1">
        <name>Mg(2+)</name>
        <dbReference type="ChEBI" id="CHEBI:18420"/>
    </cofactor>
    <text evidence="1">Binds 1 Mg(2+) ion per subunit.</text>
</comment>
<comment type="PTM">
    <text evidence="1">Activated by phosphorylation.</text>
</comment>
<comment type="similarity">
    <text evidence="1">Belongs to the phosphohexose mutase family.</text>
</comment>
<proteinExistence type="inferred from homology"/>
<name>GLMM_LACDB</name>
<gene>
    <name evidence="1" type="primary">glmM</name>
    <name type="ordered locus">LBUL_0584</name>
</gene>